<comment type="function">
    <text evidence="7 8 9 10 12">Non-receptor serine/threonine protein kinase which is necessary for the maintenance of skeletal muscle structure and function. May play a role in myocyte differentiation and survival by regulating the integrity of the nuclear envelope and the expression of muscle-specific genes. May also phosphorylate PPP1R12A and inhibit the myosin phosphatase activity to regulate myosin phosphorylation. Also critical to the modulation of cardiac contractility and to the maintenance of proper cardiac conduction activity probably through the regulation of cellular calcium homeostasis. Phosphorylates PLN, a regulator of calcium pumps and may regulate sarcoplasmic reticulum calcium uptake in myocytes. May also phosphorylate FXYD1/PLM which is able to induce chloride currents. May also play a role in synaptic plasticity.</text>
</comment>
<comment type="catalytic activity">
    <reaction>
        <text>L-seryl-[protein] + ATP = O-phospho-L-seryl-[protein] + ADP + H(+)</text>
        <dbReference type="Rhea" id="RHEA:17989"/>
        <dbReference type="Rhea" id="RHEA-COMP:9863"/>
        <dbReference type="Rhea" id="RHEA-COMP:11604"/>
        <dbReference type="ChEBI" id="CHEBI:15378"/>
        <dbReference type="ChEBI" id="CHEBI:29999"/>
        <dbReference type="ChEBI" id="CHEBI:30616"/>
        <dbReference type="ChEBI" id="CHEBI:83421"/>
        <dbReference type="ChEBI" id="CHEBI:456216"/>
        <dbReference type="EC" id="2.7.11.1"/>
    </reaction>
</comment>
<comment type="catalytic activity">
    <reaction>
        <text>L-threonyl-[protein] + ATP = O-phospho-L-threonyl-[protein] + ADP + H(+)</text>
        <dbReference type="Rhea" id="RHEA:46608"/>
        <dbReference type="Rhea" id="RHEA-COMP:11060"/>
        <dbReference type="Rhea" id="RHEA-COMP:11605"/>
        <dbReference type="ChEBI" id="CHEBI:15378"/>
        <dbReference type="ChEBI" id="CHEBI:30013"/>
        <dbReference type="ChEBI" id="CHEBI:30616"/>
        <dbReference type="ChEBI" id="CHEBI:61977"/>
        <dbReference type="ChEBI" id="CHEBI:456216"/>
        <dbReference type="EC" id="2.7.11.1"/>
    </reaction>
</comment>
<comment type="cofactor">
    <cofactor evidence="1">
        <name>Mg(2+)</name>
        <dbReference type="ChEBI" id="CHEBI:18420"/>
    </cofactor>
</comment>
<comment type="activity regulation">
    <text evidence="1">Coiled-coil-mediated oligomerization enhances the catalytic activity. Proteolytic processing of the C-terminus may release the protein from membranes and constitute a mean to regulate the enzyme. May be regulated by HSPB2, RAC1, RAF1 and G-protein second messengers (By similarity).</text>
</comment>
<comment type="subunit">
    <text evidence="1">Homodimer; homodimerization stimulates the kinase activity. Interacts with HSPB2; may enhance DMPK kinase activity. Interacts with PLN; phosphorylates PLN. May interact with RAC1; may regulate DMPK kinase activity. Interacts with LMNA; may regulate nuclear envelope stability (By similarity).</text>
</comment>
<comment type="subcellular location">
    <subcellularLocation>
        <location>Sarcoplasmic reticulum membrane</location>
    </subcellularLocation>
    <subcellularLocation>
        <location>Cell membrane</location>
    </subcellularLocation>
    <text>Localizes to sarcoplasmic reticulum membranes of cardiomyocytes.</text>
</comment>
<comment type="subcellular location">
    <molecule>Isoform 1</molecule>
    <subcellularLocation>
        <location>Endoplasmic reticulum membrane</location>
        <topology>Single-pass type IV membrane protein</topology>
        <orientation>Cytoplasmic side</orientation>
    </subcellularLocation>
    <subcellularLocation>
        <location>Nucleus outer membrane</location>
        <topology>Single-pass type IV membrane protein</topology>
        <orientation>Cytoplasmic side</orientation>
    </subcellularLocation>
</comment>
<comment type="subcellular location">
    <molecule>Isoform 8</molecule>
    <subcellularLocation>
        <location>Mitochondrion outer membrane</location>
        <topology>Single-pass type IV membrane protein</topology>
    </subcellularLocation>
</comment>
<comment type="subcellular location">
    <molecule>Isoform 5</molecule>
    <subcellularLocation>
        <location>Cytoplasm</location>
        <location>Cytosol</location>
    </subcellularLocation>
</comment>
<comment type="alternative products">
    <event type="alternative splicing"/>
    <isoform>
        <id>P54265-1</id>
        <name>1</name>
        <name>DMPK A</name>
        <sequence type="displayed"/>
    </isoform>
    <isoform>
        <id>P54265-2</id>
        <name>2</name>
        <sequence type="described" ref="VSP_004819"/>
    </isoform>
    <isoform>
        <id>P54265-3</id>
        <name>3</name>
        <name>DMPK B</name>
        <sequence type="described" ref="VSP_004820"/>
    </isoform>
    <isoform>
        <id>P54265-4</id>
        <name>4</name>
        <sequence type="described" ref="VSP_004820 VSP_004821 VSP_004822"/>
    </isoform>
    <isoform>
        <id>P54265-5</id>
        <name>5</name>
        <name>DMPK E</name>
        <sequence type="described" ref="VSP_004823 VSP_004824"/>
    </isoform>
    <isoform>
        <id>P54265-6</id>
        <name>6</name>
        <name>DMPK F</name>
        <sequence type="described" ref="VSP_004820 VSP_004823 VSP_004824"/>
    </isoform>
    <isoform>
        <id>P54265-7</id>
        <name>7</name>
        <sequence type="described" ref="VSP_004825 VSP_004826"/>
    </isoform>
    <isoform>
        <id>P54265-8</id>
        <name>8</name>
        <name>DMPK C</name>
        <sequence type="described" ref="VSP_004827"/>
    </isoform>
    <isoform>
        <id>P54265-9</id>
        <name>9</name>
        <name>DMPK D</name>
        <sequence type="described" ref="VSP_004820 VSP_004827"/>
    </isoform>
    <isoform>
        <id>P54265-10</id>
        <name>10</name>
        <sequence type="described" ref="VSP_004828 VSP_004829"/>
    </isoform>
    <text>Additional isoforms seem to exist.</text>
</comment>
<comment type="tissue specificity">
    <text evidence="8">Expressed in all tissues tested, with a predominance in brain, skeletal muscle, heart, and other tissues containing smooth muscle. In the heart, expression is restricted to the cardiomyocytes in the ventricle and atrium.</text>
</comment>
<comment type="developmental stage">
    <text evidence="8">Primarily detected in striated muscle structures of the 14.5 day embryo, including all major muscles in the skeletal structures, cardiac muscle, diaphragm, and the smooth muscle of the lung and gut.</text>
</comment>
<comment type="domain">
    <text evidence="1">The coiled coil domain is required for homodimerization and regulates the enzymatic activity.</text>
</comment>
<comment type="PTM">
    <text evidence="1">Phosphorylated. Autophosphorylates. Phosphorylation by RAF1 may result in activation of DMPK (By similarity).</text>
</comment>
<comment type="PTM">
    <text evidence="1">Proteolytic processing of the C-terminus may remove the transmembrane domain and release the kinase from membranes stimulating its activity.</text>
</comment>
<comment type="disruption phenotype">
    <text evidence="6 11">Mice are fertile and no negative selection against the absence of the protein is apparent. Newborn do not display hypotonia, respiratory distress or gross anatomical abnormalities. However, a progressive muscle weakness a hall mark of myopathies is observed. Muscles from mature mice show variation in fiber size, increase fiber degeneration and fibrosis. They also display age-related progression in atrioventricular conduction defects that are reminiscent of congenital myotonic dystrophy.</text>
</comment>
<comment type="similarity">
    <text evidence="14">Belongs to the protein kinase superfamily. AGC Ser/Thr protein kinase family. DMPK subfamily.</text>
</comment>
<keyword id="KW-0025">Alternative splicing</keyword>
<keyword id="KW-0067">ATP-binding</keyword>
<keyword id="KW-1003">Cell membrane</keyword>
<keyword id="KW-0175">Coiled coil</keyword>
<keyword id="KW-0963">Cytoplasm</keyword>
<keyword id="KW-0256">Endoplasmic reticulum</keyword>
<keyword id="KW-0418">Kinase</keyword>
<keyword id="KW-0460">Magnesium</keyword>
<keyword id="KW-0472">Membrane</keyword>
<keyword id="KW-0479">Metal-binding</keyword>
<keyword id="KW-0496">Mitochondrion</keyword>
<keyword id="KW-1000">Mitochondrion outer membrane</keyword>
<keyword id="KW-0547">Nucleotide-binding</keyword>
<keyword id="KW-0539">Nucleus</keyword>
<keyword id="KW-0597">Phosphoprotein</keyword>
<keyword id="KW-1185">Reference proteome</keyword>
<keyword id="KW-0703">Sarcoplasmic reticulum</keyword>
<keyword id="KW-0723">Serine/threonine-protein kinase</keyword>
<keyword id="KW-0808">Transferase</keyword>
<keyword id="KW-0812">Transmembrane</keyword>
<keyword id="KW-1133">Transmembrane helix</keyword>
<dbReference type="EC" id="2.7.11.1"/>
<dbReference type="EMBL" id="Z21503">
    <property type="protein sequence ID" value="CAA79715.1"/>
    <property type="molecule type" value="Genomic_DNA"/>
</dbReference>
<dbReference type="EMBL" id="Z21504">
    <property type="protein sequence ID" value="CAA79715.1"/>
    <property type="status" value="JOINED"/>
    <property type="molecule type" value="Genomic_DNA"/>
</dbReference>
<dbReference type="EMBL" id="Z21505">
    <property type="protein sequence ID" value="CAA79715.1"/>
    <property type="status" value="JOINED"/>
    <property type="molecule type" value="Genomic_DNA"/>
</dbReference>
<dbReference type="EMBL" id="Z21506">
    <property type="protein sequence ID" value="CAA79715.1"/>
    <property type="status" value="JOINED"/>
    <property type="molecule type" value="Genomic_DNA"/>
</dbReference>
<dbReference type="EMBL" id="Z38015">
    <property type="protein sequence ID" value="CAA86113.1"/>
    <property type="molecule type" value="Genomic_DNA"/>
</dbReference>
<dbReference type="EMBL" id="S60313">
    <property type="protein sequence ID" value="AAC60667.1"/>
    <property type="molecule type" value="mRNA"/>
</dbReference>
<dbReference type="EMBL" id="S60314">
    <property type="protein sequence ID" value="AAC60666.1"/>
    <property type="molecule type" value="mRNA"/>
</dbReference>
<dbReference type="EMBL" id="S60315">
    <property type="protein sequence ID" value="AAC60665.1"/>
    <property type="molecule type" value="mRNA"/>
</dbReference>
<dbReference type="EMBL" id="S60316">
    <property type="protein sequence ID" value="AAC60664.1"/>
    <property type="molecule type" value="mRNA"/>
</dbReference>
<dbReference type="CCDS" id="CCDS39794.1">
    <molecule id="P54265-1"/>
</dbReference>
<dbReference type="CCDS" id="CCDS52054.1">
    <molecule id="P54265-5"/>
</dbReference>
<dbReference type="CCDS" id="CCDS90170.1">
    <molecule id="P54265-9"/>
</dbReference>
<dbReference type="PIR" id="I78393">
    <property type="entry name" value="I78393"/>
</dbReference>
<dbReference type="PIR" id="I78394">
    <property type="entry name" value="I78394"/>
</dbReference>
<dbReference type="PIR" id="I78395">
    <property type="entry name" value="I78395"/>
</dbReference>
<dbReference type="PIR" id="I78396">
    <property type="entry name" value="I78396"/>
</dbReference>
<dbReference type="PIR" id="S71829">
    <property type="entry name" value="S71829"/>
</dbReference>
<dbReference type="RefSeq" id="NP_001177420.1">
    <molecule id="P54265-5"/>
    <property type="nucleotide sequence ID" value="NM_001190491.2"/>
</dbReference>
<dbReference type="RefSeq" id="NP_001361580.1">
    <molecule id="P54265-9"/>
    <property type="nucleotide sequence ID" value="NM_001374651.1"/>
</dbReference>
<dbReference type="RefSeq" id="NP_001366186.1">
    <molecule id="P54265-8"/>
    <property type="nucleotide sequence ID" value="NM_001379257.1"/>
</dbReference>
<dbReference type="RefSeq" id="NP_115794.1">
    <molecule id="P54265-1"/>
    <property type="nucleotide sequence ID" value="NM_032418.3"/>
</dbReference>
<dbReference type="RefSeq" id="XP_006539581.1">
    <property type="nucleotide sequence ID" value="XM_006539518.3"/>
</dbReference>
<dbReference type="RefSeq" id="XP_006539582.1">
    <molecule id="P54265-3"/>
    <property type="nucleotide sequence ID" value="XM_006539519.4"/>
</dbReference>
<dbReference type="RefSeq" id="XP_011248735.1">
    <property type="nucleotide sequence ID" value="XM_011250433.2"/>
</dbReference>
<dbReference type="SMR" id="P54265"/>
<dbReference type="FunCoup" id="P54265">
    <property type="interactions" value="114"/>
</dbReference>
<dbReference type="STRING" id="10090.ENSMUSP00000032568"/>
<dbReference type="GlyGen" id="P54265">
    <property type="glycosylation" value="1 site"/>
</dbReference>
<dbReference type="iPTMnet" id="P54265"/>
<dbReference type="PhosphoSitePlus" id="P54265"/>
<dbReference type="PaxDb" id="10090-ENSMUSP00000032568"/>
<dbReference type="PeptideAtlas" id="P54265"/>
<dbReference type="ProteomicsDB" id="279443">
    <molecule id="P54265-1"/>
</dbReference>
<dbReference type="ProteomicsDB" id="279444">
    <molecule id="P54265-2"/>
</dbReference>
<dbReference type="ProteomicsDB" id="279445">
    <molecule id="P54265-3"/>
</dbReference>
<dbReference type="ProteomicsDB" id="279446">
    <molecule id="P54265-4"/>
</dbReference>
<dbReference type="ProteomicsDB" id="279447">
    <molecule id="P54265-5"/>
</dbReference>
<dbReference type="ProteomicsDB" id="279448">
    <molecule id="P54265-6"/>
</dbReference>
<dbReference type="ProteomicsDB" id="279449">
    <molecule id="P54265-7"/>
</dbReference>
<dbReference type="ProteomicsDB" id="279450">
    <molecule id="P54265-8"/>
</dbReference>
<dbReference type="ProteomicsDB" id="279451">
    <molecule id="P54265-9"/>
</dbReference>
<dbReference type="ProteomicsDB" id="279452">
    <molecule id="P54265-10"/>
</dbReference>
<dbReference type="Pumba" id="P54265"/>
<dbReference type="Antibodypedia" id="2044">
    <property type="antibodies" value="297 antibodies from 30 providers"/>
</dbReference>
<dbReference type="DNASU" id="13400"/>
<dbReference type="Ensembl" id="ENSMUST00000032568.14">
    <molecule id="P54265-1"/>
    <property type="protein sequence ID" value="ENSMUSP00000032568.8"/>
    <property type="gene ID" value="ENSMUSG00000030409.17"/>
</dbReference>
<dbReference type="Ensembl" id="ENSMUST00000108473.10">
    <molecule id="P54265-5"/>
    <property type="protein sequence ID" value="ENSMUSP00000104113.4"/>
    <property type="gene ID" value="ENSMUSG00000030409.17"/>
</dbReference>
<dbReference type="Ensembl" id="ENSMUST00000238982.2">
    <molecule id="P54265-9"/>
    <property type="protein sequence ID" value="ENSMUSP00000158930.2"/>
    <property type="gene ID" value="ENSMUSG00000030409.17"/>
</dbReference>
<dbReference type="GeneID" id="13400"/>
<dbReference type="KEGG" id="mmu:13400"/>
<dbReference type="UCSC" id="uc009fkn.2">
    <molecule id="P54265-1"/>
    <property type="organism name" value="mouse"/>
</dbReference>
<dbReference type="UCSC" id="uc009fkp.2">
    <molecule id="P54265-5"/>
    <property type="organism name" value="mouse"/>
</dbReference>
<dbReference type="UCSC" id="uc009fkq.2">
    <molecule id="P54265-8"/>
    <property type="organism name" value="mouse"/>
</dbReference>
<dbReference type="AGR" id="MGI:94906"/>
<dbReference type="CTD" id="1760"/>
<dbReference type="MGI" id="MGI:94906">
    <property type="gene designation" value="Dmpk"/>
</dbReference>
<dbReference type="VEuPathDB" id="HostDB:ENSMUSG00000030409"/>
<dbReference type="eggNOG" id="KOG0612">
    <property type="taxonomic scope" value="Eukaryota"/>
</dbReference>
<dbReference type="GeneTree" id="ENSGT00940000162019"/>
<dbReference type="HOGENOM" id="CLU_000288_140_4_1"/>
<dbReference type="InParanoid" id="P54265"/>
<dbReference type="OMA" id="VCQYPLV"/>
<dbReference type="OrthoDB" id="2156623at2759"/>
<dbReference type="PhylomeDB" id="P54265"/>
<dbReference type="TreeFam" id="TF105337"/>
<dbReference type="BRENDA" id="2.7.11.1">
    <property type="organism ID" value="3474"/>
</dbReference>
<dbReference type="Reactome" id="R-MMU-5578775">
    <property type="pathway name" value="Ion homeostasis"/>
</dbReference>
<dbReference type="BioGRID-ORCS" id="13400">
    <property type="hits" value="4 hits in 79 CRISPR screens"/>
</dbReference>
<dbReference type="ChiTaRS" id="Dmpk">
    <property type="organism name" value="mouse"/>
</dbReference>
<dbReference type="PRO" id="PR:P54265"/>
<dbReference type="Proteomes" id="UP000000589">
    <property type="component" value="Chromosome 7"/>
</dbReference>
<dbReference type="RNAct" id="P54265">
    <property type="molecule type" value="protein"/>
</dbReference>
<dbReference type="Bgee" id="ENSMUSG00000030409">
    <property type="expression patterns" value="Expressed in myocardium of ventricle and 206 other cell types or tissues"/>
</dbReference>
<dbReference type="ExpressionAtlas" id="P54265">
    <property type="expression patterns" value="baseline and differential"/>
</dbReference>
<dbReference type="GO" id="GO:0005829">
    <property type="term" value="C:cytosol"/>
    <property type="evidence" value="ECO:0000314"/>
    <property type="project" value="UniProtKB"/>
</dbReference>
<dbReference type="GO" id="GO:0005789">
    <property type="term" value="C:endoplasmic reticulum membrane"/>
    <property type="evidence" value="ECO:0000314"/>
    <property type="project" value="UniProtKB"/>
</dbReference>
<dbReference type="GO" id="GO:0005741">
    <property type="term" value="C:mitochondrial outer membrane"/>
    <property type="evidence" value="ECO:0000314"/>
    <property type="project" value="UniProtKB"/>
</dbReference>
<dbReference type="GO" id="GO:0031965">
    <property type="term" value="C:nuclear membrane"/>
    <property type="evidence" value="ECO:0000314"/>
    <property type="project" value="UniProtKB"/>
</dbReference>
<dbReference type="GO" id="GO:0005640">
    <property type="term" value="C:nuclear outer membrane"/>
    <property type="evidence" value="ECO:0007669"/>
    <property type="project" value="UniProtKB-SubCell"/>
</dbReference>
<dbReference type="GO" id="GO:0005886">
    <property type="term" value="C:plasma membrane"/>
    <property type="evidence" value="ECO:0000314"/>
    <property type="project" value="UniProtKB"/>
</dbReference>
<dbReference type="GO" id="GO:0033017">
    <property type="term" value="C:sarcoplasmic reticulum membrane"/>
    <property type="evidence" value="ECO:0000314"/>
    <property type="project" value="UniProtKB"/>
</dbReference>
<dbReference type="GO" id="GO:0005524">
    <property type="term" value="F:ATP binding"/>
    <property type="evidence" value="ECO:0000250"/>
    <property type="project" value="UniProtKB"/>
</dbReference>
<dbReference type="GO" id="GO:0046872">
    <property type="term" value="F:metal ion binding"/>
    <property type="evidence" value="ECO:0007669"/>
    <property type="project" value="UniProtKB-KW"/>
</dbReference>
<dbReference type="GO" id="GO:0017020">
    <property type="term" value="F:myosin phosphatase regulator activity"/>
    <property type="evidence" value="ECO:0000250"/>
    <property type="project" value="UniProtKB"/>
</dbReference>
<dbReference type="GO" id="GO:0106310">
    <property type="term" value="F:protein serine kinase activity"/>
    <property type="evidence" value="ECO:0007669"/>
    <property type="project" value="RHEA"/>
</dbReference>
<dbReference type="GO" id="GO:0004674">
    <property type="term" value="F:protein serine/threonine kinase activity"/>
    <property type="evidence" value="ECO:0000250"/>
    <property type="project" value="UniProtKB"/>
</dbReference>
<dbReference type="GO" id="GO:0006874">
    <property type="term" value="P:intracellular calcium ion homeostasis"/>
    <property type="evidence" value="ECO:0000315"/>
    <property type="project" value="UniProtKB"/>
</dbReference>
<dbReference type="GO" id="GO:0010657">
    <property type="term" value="P:muscle cell apoptotic process"/>
    <property type="evidence" value="ECO:0000250"/>
    <property type="project" value="UniProtKB"/>
</dbReference>
<dbReference type="GO" id="GO:0006998">
    <property type="term" value="P:nuclear envelope organization"/>
    <property type="evidence" value="ECO:0000315"/>
    <property type="project" value="UniProtKB"/>
</dbReference>
<dbReference type="GO" id="GO:0006468">
    <property type="term" value="P:protein phosphorylation"/>
    <property type="evidence" value="ECO:0000250"/>
    <property type="project" value="UniProtKB"/>
</dbReference>
<dbReference type="GO" id="GO:0014853">
    <property type="term" value="P:regulation of excitatory postsynaptic membrane potential involved in skeletal muscle contraction"/>
    <property type="evidence" value="ECO:0000315"/>
    <property type="project" value="MGI"/>
</dbReference>
<dbReference type="GO" id="GO:0008016">
    <property type="term" value="P:regulation of heart contraction"/>
    <property type="evidence" value="ECO:0000314"/>
    <property type="project" value="UniProtKB"/>
</dbReference>
<dbReference type="GO" id="GO:0010830">
    <property type="term" value="P:regulation of myotube differentiation"/>
    <property type="evidence" value="ECO:0000315"/>
    <property type="project" value="UniProtKB"/>
</dbReference>
<dbReference type="GO" id="GO:0014722">
    <property type="term" value="P:regulation of skeletal muscle contraction by calcium ion signaling"/>
    <property type="evidence" value="ECO:0000315"/>
    <property type="project" value="UniProtKB"/>
</dbReference>
<dbReference type="GO" id="GO:0002028">
    <property type="term" value="P:regulation of sodium ion transport"/>
    <property type="evidence" value="ECO:0000315"/>
    <property type="project" value="MGI"/>
</dbReference>
<dbReference type="GO" id="GO:0051823">
    <property type="term" value="P:regulation of synapse structural plasticity"/>
    <property type="evidence" value="ECO:0000315"/>
    <property type="project" value="UniProtKB"/>
</dbReference>
<dbReference type="FunFam" id="1.20.5.340:FF:000026">
    <property type="entry name" value="myotonin-protein kinase isoform X2"/>
    <property type="match status" value="1"/>
</dbReference>
<dbReference type="FunFam" id="1.10.510.10:FF:000014">
    <property type="entry name" value="Non-specific serine/threonine protein kinase"/>
    <property type="match status" value="1"/>
</dbReference>
<dbReference type="FunFam" id="3.30.200.20:FF:000017">
    <property type="entry name" value="Non-specific serine/threonine protein kinase"/>
    <property type="match status" value="1"/>
</dbReference>
<dbReference type="Gene3D" id="1.20.5.340">
    <property type="match status" value="1"/>
</dbReference>
<dbReference type="Gene3D" id="3.30.200.20">
    <property type="entry name" value="Phosphorylase Kinase, domain 1"/>
    <property type="match status" value="1"/>
</dbReference>
<dbReference type="Gene3D" id="1.10.510.10">
    <property type="entry name" value="Transferase(Phosphotransferase) domain 1"/>
    <property type="match status" value="1"/>
</dbReference>
<dbReference type="InterPro" id="IPR000961">
    <property type="entry name" value="AGC-kinase_C"/>
</dbReference>
<dbReference type="InterPro" id="IPR011009">
    <property type="entry name" value="Kinase-like_dom_sf"/>
</dbReference>
<dbReference type="InterPro" id="IPR014930">
    <property type="entry name" value="Myotonic_dystrophy_kinase_coil"/>
</dbReference>
<dbReference type="InterPro" id="IPR000719">
    <property type="entry name" value="Prot_kinase_dom"/>
</dbReference>
<dbReference type="InterPro" id="IPR017441">
    <property type="entry name" value="Protein_kinase_ATP_BS"/>
</dbReference>
<dbReference type="InterPro" id="IPR050839">
    <property type="entry name" value="Rho-assoc_Ser/Thr_Kinase"/>
</dbReference>
<dbReference type="InterPro" id="IPR008271">
    <property type="entry name" value="Ser/Thr_kinase_AS"/>
</dbReference>
<dbReference type="PANTHER" id="PTHR22988:SF79">
    <property type="entry name" value="LOW QUALITY PROTEIN: MYOTONIN-PROTEIN KINASE"/>
    <property type="match status" value="1"/>
</dbReference>
<dbReference type="PANTHER" id="PTHR22988">
    <property type="entry name" value="MYOTONIC DYSTROPHY S/T KINASE-RELATED"/>
    <property type="match status" value="1"/>
</dbReference>
<dbReference type="Pfam" id="PF08826">
    <property type="entry name" value="DMPK_coil"/>
    <property type="match status" value="1"/>
</dbReference>
<dbReference type="Pfam" id="PF00069">
    <property type="entry name" value="Pkinase"/>
    <property type="match status" value="1"/>
</dbReference>
<dbReference type="SMART" id="SM00133">
    <property type="entry name" value="S_TK_X"/>
    <property type="match status" value="1"/>
</dbReference>
<dbReference type="SMART" id="SM00220">
    <property type="entry name" value="S_TKc"/>
    <property type="match status" value="1"/>
</dbReference>
<dbReference type="SUPFAM" id="SSF56112">
    <property type="entry name" value="Protein kinase-like (PK-like)"/>
    <property type="match status" value="1"/>
</dbReference>
<dbReference type="PROSITE" id="PS51285">
    <property type="entry name" value="AGC_KINASE_CTER"/>
    <property type="match status" value="1"/>
</dbReference>
<dbReference type="PROSITE" id="PS00107">
    <property type="entry name" value="PROTEIN_KINASE_ATP"/>
    <property type="match status" value="1"/>
</dbReference>
<dbReference type="PROSITE" id="PS50011">
    <property type="entry name" value="PROTEIN_KINASE_DOM"/>
    <property type="match status" value="1"/>
</dbReference>
<dbReference type="PROSITE" id="PS00108">
    <property type="entry name" value="PROTEIN_KINASE_ST"/>
    <property type="match status" value="1"/>
</dbReference>
<feature type="chain" id="PRO_0000085925" description="Myotonin-protein kinase">
    <location>
        <begin position="1"/>
        <end position="631"/>
    </location>
</feature>
<feature type="topological domain" description="Cytoplasmic" evidence="2">
    <location>
        <begin position="1"/>
        <end position="592"/>
    </location>
</feature>
<feature type="transmembrane region" description="Helical; Anchor for type IV membrane protein" evidence="2">
    <location>
        <begin position="593"/>
        <end position="613"/>
    </location>
</feature>
<feature type="topological domain" description="Lumenal" evidence="2">
    <location>
        <begin position="614"/>
        <end position="631"/>
    </location>
</feature>
<feature type="domain" description="Protein kinase" evidence="3">
    <location>
        <begin position="71"/>
        <end position="339"/>
    </location>
</feature>
<feature type="domain" description="AGC-kinase C-terminal" evidence="4">
    <location>
        <begin position="340"/>
        <end position="415"/>
    </location>
</feature>
<feature type="coiled-coil region" evidence="2">
    <location>
        <begin position="464"/>
        <end position="532"/>
    </location>
</feature>
<feature type="active site" description="Proton acceptor" evidence="3 5">
    <location>
        <position position="195"/>
    </location>
</feature>
<feature type="binding site" evidence="3">
    <location>
        <begin position="77"/>
        <end position="85"/>
    </location>
    <ligand>
        <name>ATP</name>
        <dbReference type="ChEBI" id="CHEBI:30616"/>
    </ligand>
</feature>
<feature type="binding site" evidence="3">
    <location>
        <position position="100"/>
    </location>
    <ligand>
        <name>ATP</name>
        <dbReference type="ChEBI" id="CHEBI:30616"/>
    </ligand>
</feature>
<feature type="modified residue" description="Phosphoserine; by autocatalysis" evidence="1">
    <location>
        <position position="216"/>
    </location>
</feature>
<feature type="modified residue" description="Phosphoserine; by autocatalysis" evidence="1">
    <location>
        <position position="228"/>
    </location>
</feature>
<feature type="modified residue" description="Phosphothreonine; by autocatalysis" evidence="1">
    <location>
        <position position="234"/>
    </location>
</feature>
<feature type="splice variant" id="VSP_004819" description="In isoform 2." evidence="13">
    <location>
        <begin position="328"/>
        <end position="356"/>
    </location>
</feature>
<feature type="splice variant" id="VSP_004820" description="In isoform 3, isoform 4, isoform 6 and isoform 9." evidence="13">
    <location>
        <begin position="378"/>
        <end position="382"/>
    </location>
</feature>
<feature type="splice variant" id="VSP_004821" description="In isoform 4." evidence="13">
    <original>DNQVP</original>
    <variation>LKRPT</variation>
    <location>
        <begin position="412"/>
        <end position="416"/>
    </location>
</feature>
<feature type="splice variant" id="VSP_004822" description="In isoform 4." evidence="13">
    <location>
        <begin position="417"/>
        <end position="631"/>
    </location>
</feature>
<feature type="splice variant" id="VSP_004825" description="In isoform 7." evidence="14">
    <original>AITGVPSPRATDPPSHLDGPPA</original>
    <variation>GESLTCFQPRGHWVEMGGMLGV</variation>
    <location>
        <begin position="536"/>
        <end position="557"/>
    </location>
</feature>
<feature type="splice variant" id="VSP_004823" description="In isoform 5 and isoform 6." evidence="13">
    <original>AI</original>
    <variation>DP</variation>
    <location>
        <begin position="536"/>
        <end position="537"/>
    </location>
</feature>
<feature type="splice variant" id="VSP_004824" description="In isoform 5 and isoform 6." evidence="13">
    <location>
        <begin position="538"/>
        <end position="631"/>
    </location>
</feature>
<feature type="splice variant" id="VSP_004827" description="In isoform 8 and isoform 9." evidence="13">
    <original>LDGPPAVAVGQCPLVGPGPMHRRHLLLPARIPRPGLSEARCLLLFAAALAAAATLGCTGLVAYTGGLTPVWCFPGATFAP</original>
    <variation>MAPRPWLWASARWWGQAPCTAVTCCSLPGSLGLAYPRRVACSCSPLLWLLPPHWAALGWWPIPAVSPQSGVSREPPSPPEP</variation>
    <location>
        <begin position="552"/>
        <end position="631"/>
    </location>
</feature>
<feature type="splice variant" id="VSP_004828" description="In isoform 10." evidence="14">
    <original>LDGPPAVAVGQ</original>
    <variation>ASRQILPKGTP</variation>
    <location>
        <begin position="552"/>
        <end position="562"/>
    </location>
</feature>
<feature type="splice variant" id="VSP_004826" description="In isoform 7." evidence="14">
    <location>
        <begin position="558"/>
        <end position="631"/>
    </location>
</feature>
<feature type="splice variant" id="VSP_004829" description="In isoform 10." evidence="14">
    <location>
        <begin position="563"/>
        <end position="631"/>
    </location>
</feature>
<gene>
    <name type="primary">Dmpk</name>
    <name type="synonym">Dm15</name>
    <name type="synonym">Mdpk</name>
</gene>
<sequence>MSAEVRLRQLQQLVLDPGFLGLEPLLDLLLGVHQELGASHLAQDKYVADFLQWVEPIAARLKEVRLQRDDFEILKVIGRGAFSEVAVVKMKQTGQVYAMKIMNKWDMLKRGEVSCFREERDVLVKGDRRWITQLHFAFQDENYLYLVMEYYVGGDLLTLLSKFGERIPAEMARFYLAEIVMAIDSVHRLGYVHRDIKPDNILLDRCGHIRLADFGSCLKLQPDGMVRSLVAVGTPDYLSPEILQAVGGGPGAGSYGPECDWWALGVFAYEMFYGQTPFYADSTAETYAKIVHYREHLSLPLADTVVPEEAQDLIRGLLCPAEIRLGRGGAGDFQKHPFFFGLDWEGLRDSVPPFTPDFEGATDTCNFDVVEDRLTAMVSGGGETLSDMQEDMPLGVRLPFVGYSYCCMAFRDNQVPDPTPMELEALQLPVSDLQGLDLQPPVSPPDQVAEEADLVAVPAPVAEAETTVTLQQLQEALEEEVLTRQSLSRELEAIRTANQNFSSQLQEAEVRNRDLEAHVRQLQERMEMLQAPGAAAITGVPSPRATDPPSHLDGPPAVAVGQCPLVGPGPMHRRHLLLPARIPRPGLSEARCLLLFAAALAAAATLGCTGLVAYTGGLTPVWCFPGATFAP</sequence>
<proteinExistence type="evidence at protein level"/>
<name>DMPK_MOUSE</name>
<accession>P54265</accession>
<organism>
    <name type="scientific">Mus musculus</name>
    <name type="common">Mouse</name>
    <dbReference type="NCBI Taxonomy" id="10090"/>
    <lineage>
        <taxon>Eukaryota</taxon>
        <taxon>Metazoa</taxon>
        <taxon>Chordata</taxon>
        <taxon>Craniata</taxon>
        <taxon>Vertebrata</taxon>
        <taxon>Euteleostomi</taxon>
        <taxon>Mammalia</taxon>
        <taxon>Eutheria</taxon>
        <taxon>Euarchontoglires</taxon>
        <taxon>Glires</taxon>
        <taxon>Rodentia</taxon>
        <taxon>Myomorpha</taxon>
        <taxon>Muroidea</taxon>
        <taxon>Muridae</taxon>
        <taxon>Murinae</taxon>
        <taxon>Mus</taxon>
        <taxon>Mus</taxon>
    </lineage>
</organism>
<reference key="1">
    <citation type="journal article" date="1993" name="Hum. Mol. Genet.">
        <title>Structure and genomic sequence of the myotonic dystrophy (DM kinase) gene.</title>
        <authorList>
            <person name="Mahadevan M.S."/>
            <person name="Amemiya C."/>
            <person name="Jansen G."/>
            <person name="Sabourin L."/>
            <person name="Baird S."/>
            <person name="Neville C.E."/>
            <person name="Wormskamp N."/>
            <person name="Segers B."/>
            <person name="Batzer M."/>
            <person name="Lamerdin J."/>
            <person name="de Jong P.J."/>
            <person name="Wieringa B."/>
            <person name="Korneluk R.G."/>
        </authorList>
    </citation>
    <scope>NUCLEOTIDE SEQUENCE [GENOMIC DNA]</scope>
</reference>
<reference key="2">
    <citation type="journal article" date="1993" name="Hum. Mol. Genet.">
        <title>No imprinting involved in the expression of DM-kinase mRNAs in mouse and human tissues.</title>
        <authorList>
            <person name="Jansen G."/>
            <person name="Bartolomei M."/>
            <person name="Kalscheuer V."/>
            <person name="Merkx G."/>
            <person name="Wormskamp N."/>
            <person name="Mariman E."/>
            <person name="Smeets D."/>
            <person name="Ropers H.-H."/>
            <person name="Wieringa B."/>
        </authorList>
    </citation>
    <scope>NUCLEOTIDE SEQUENCE [GENOMIC DNA]</scope>
    <source>
        <strain>129/Sv</strain>
    </source>
</reference>
<reference key="3">
    <citation type="journal article" date="1992" name="Nat. Genet.">
        <title>Characterization of the myotonic dystrophy region predicts multiple protein isoform-encoding mRNAs.</title>
        <authorList>
            <person name="Jansen G."/>
            <person name="Mahadevan M.S."/>
            <person name="Amemiya C."/>
            <person name="Wormskamp N."/>
            <person name="Segers B."/>
            <person name="Hendriks W."/>
            <person name="O'Hoy K."/>
            <person name="Baird S."/>
            <person name="Sabourin L."/>
            <person name="Lennon G."/>
            <person name="Jap P.L."/>
            <person name="Iles D."/>
            <person name="Coerwinkel M."/>
            <person name="Hofker M."/>
            <person name="Carrano A.V."/>
            <person name="de Jong P.J."/>
            <person name="Korneluk R.G."/>
            <person name="Wieringa B."/>
        </authorList>
    </citation>
    <scope>NUCLEOTIDE SEQUENCE [MRNA] OF 117-631 (ISOFORMS 2; 4; 5 AND 8)</scope>
    <source>
        <tissue>Brain</tissue>
    </source>
</reference>
<reference key="4">
    <citation type="journal article" date="1996" name="Nat. Genet.">
        <title>Mice lacking the myotonic dystrophy protein kinase develop a late onset progressive myopathy.</title>
        <authorList>
            <person name="Reddy S."/>
            <person name="Smith D.B."/>
            <person name="Rich M.M."/>
            <person name="Leferovich J.M."/>
            <person name="Reilly P."/>
            <person name="Davis B.M."/>
            <person name="Tran K."/>
            <person name="Rayburn H."/>
            <person name="Bronson R."/>
            <person name="Cros D."/>
            <person name="Balice-Gordon R.J."/>
            <person name="Housman D."/>
        </authorList>
    </citation>
    <scope>DISRUPTION PHENOTYPE</scope>
</reference>
<reference key="5">
    <citation type="journal article" date="1997" name="J. Clin. Invest.">
        <title>Myotonic dystrophy protein kinase is involved in the modulation of the Ca2+ homeostasis in skeletal muscle cells.</title>
        <authorList>
            <person name="Benders A.A."/>
            <person name="Groenen P.J."/>
            <person name="Oerlemans F.T."/>
            <person name="Veerkamp J.H."/>
            <person name="Wieringa B."/>
        </authorList>
    </citation>
    <scope>FUNCTION IN CELLULAR CALCIUM HOMEOSTASIS</scope>
</reference>
<reference key="6">
    <citation type="journal article" date="2000" name="Hum. Mol. Genet.">
        <title>Constitutive and regulated modes of splicing produce six major myotonic dystrophy protein kinase (DMPK) isoforms with distinct properties.</title>
        <authorList>
            <person name="Groenen P.J.T.A."/>
            <person name="Wansink D.G."/>
            <person name="Coerwinkel M."/>
            <person name="van den Broek W."/>
            <person name="Jansen G."/>
            <person name="Wieringa B."/>
        </authorList>
    </citation>
    <scope>ALTERNATIVE SPLICING (ISOFORMS 1; 3; 5; 6; 8 AND 9)</scope>
</reference>
<reference key="7">
    <citation type="journal article" date="2000" name="J. Interv. Card. Electrophysiol.">
        <title>Progressive atrioventricular conduction block in a mouse myotonic dystrophy model.</title>
        <authorList>
            <person name="Berul C.I."/>
            <person name="Maguire C.T."/>
            <person name="Gehrmann J."/>
            <person name="Reddy S."/>
        </authorList>
    </citation>
    <scope>DISRUPTION PHENOTYPE</scope>
</reference>
<reference key="8">
    <citation type="journal article" date="2003" name="J. Neurophysiol.">
        <title>A role for myotonic dystrophy protein kinase in synaptic plasticity.</title>
        <authorList>
            <person name="Schulz P.E."/>
            <person name="McIntosh A.D."/>
            <person name="Kasten M.R."/>
            <person name="Wieringa B."/>
            <person name="Epstein H.F."/>
        </authorList>
    </citation>
    <scope>FUNCTION IN SYNAPTIC PLASTICITY</scope>
</reference>
<reference key="9">
    <citation type="journal article" date="2005" name="J. Biol. Chem.">
        <title>Myotonic dystrophy protein kinase phosphorylates phospholamban and regulates calcium uptake in cardiomyocyte sarcoplasmic reticulum.</title>
        <authorList>
            <person name="Kaliman P."/>
            <person name="Catalucci D."/>
            <person name="Lam J.T."/>
            <person name="Kondo R."/>
            <person name="Gutierrez J.C."/>
            <person name="Reddy S."/>
            <person name="Palacin M."/>
            <person name="Zorzano A."/>
            <person name="Chien K.R."/>
            <person name="Ruiz-Lozano P."/>
        </authorList>
    </citation>
    <scope>FUNCTION IN CALCIUM UPTAKE BY CARDIAC SARCOPLASMIC RETICULUM</scope>
    <scope>FUNCTION IN PHOSPHORYLATION OF PLN</scope>
    <scope>SUBCELLULAR LOCATION</scope>
    <scope>TISSUE SPECIFICITY</scope>
    <scope>DEVELOPMENTAL STAGE</scope>
</reference>
<reference key="10">
    <citation type="journal article" date="2005" name="Mol. Cell. Biol.">
        <title>Divergent mitochondrial and endoplasmic reticulum association of DMPK splice isoforms depends on unique sequence arrangements in tail anchors.</title>
        <authorList>
            <person name="van Herpen R.E."/>
            <person name="Oude Ophuis R.J."/>
            <person name="Wijers M."/>
            <person name="Bennink M.B."/>
            <person name="van de Loo F.A."/>
            <person name="Fransen J."/>
            <person name="Wieringa B."/>
            <person name="Wansink D.G."/>
        </authorList>
    </citation>
    <scope>ALTERNATIVE SPLICING</scope>
    <scope>SUBCELLULAR LOCATION</scope>
    <scope>TOPOLOGY</scope>
    <scope>AUTOPHOSPHORYLATION</scope>
</reference>
<reference key="11">
    <citation type="journal article" date="2008" name="Dev. Dyn.">
        <title>Myotonic dystrophy protein kinase is expressed in embryonic myocytes and is required for myotube formation.</title>
        <authorList>
            <person name="Harmon E.B."/>
            <person name="Harmon M.L."/>
            <person name="Larsen T.D."/>
            <person name="Paulson A.F."/>
            <person name="Perryman M.B."/>
        </authorList>
    </citation>
    <scope>FUNCTION IN MYOGENESIS</scope>
    <scope>SUBCELLULAR LOCATION</scope>
</reference>
<reference key="12">
    <citation type="journal article" date="2010" name="Cell">
        <title>A tissue-specific atlas of mouse protein phosphorylation and expression.</title>
        <authorList>
            <person name="Huttlin E.L."/>
            <person name="Jedrychowski M.P."/>
            <person name="Elias J.E."/>
            <person name="Goswami T."/>
            <person name="Rad R."/>
            <person name="Beausoleil S.A."/>
            <person name="Villen J."/>
            <person name="Haas W."/>
            <person name="Sowa M.E."/>
            <person name="Gygi S.P."/>
        </authorList>
    </citation>
    <scope>IDENTIFICATION BY MASS SPECTROMETRY [LARGE SCALE ANALYSIS]</scope>
    <source>
        <tissue>Heart</tissue>
    </source>
</reference>
<reference key="13">
    <citation type="journal article" date="2011" name="J. Biol. Chem.">
        <title>Myotonic dystrophy protein kinase is critical for nuclear envelope integrity.</title>
        <authorList>
            <person name="Harmon E.B."/>
            <person name="Harmon M.L."/>
            <person name="Larsen T.D."/>
            <person name="Yang J."/>
            <person name="Glasford J.W."/>
            <person name="Perryman M.B."/>
        </authorList>
    </citation>
    <scope>FUNCTION IN NUCLEAR ENVELOPE STABILITY</scope>
    <scope>SUBCELLULAR LOCATION</scope>
</reference>
<protein>
    <recommendedName>
        <fullName>Myotonin-protein kinase</fullName>
        <shortName>MT-PK</shortName>
        <ecNumber>2.7.11.1</ecNumber>
    </recommendedName>
    <alternativeName>
        <fullName>DM-kinase</fullName>
        <shortName>DMK</shortName>
    </alternativeName>
    <alternativeName>
        <fullName>DMPK</fullName>
    </alternativeName>
    <alternativeName>
        <fullName>Myotonic dystrophy protein kinase</fullName>
        <shortName>MDPK</shortName>
    </alternativeName>
</protein>
<evidence type="ECO:0000250" key="1"/>
<evidence type="ECO:0000255" key="2"/>
<evidence type="ECO:0000255" key="3">
    <source>
        <dbReference type="PROSITE-ProRule" id="PRU00159"/>
    </source>
</evidence>
<evidence type="ECO:0000255" key="4">
    <source>
        <dbReference type="PROSITE-ProRule" id="PRU00618"/>
    </source>
</evidence>
<evidence type="ECO:0000255" key="5">
    <source>
        <dbReference type="PROSITE-ProRule" id="PRU10027"/>
    </source>
</evidence>
<evidence type="ECO:0000269" key="6">
    <source>
    </source>
</evidence>
<evidence type="ECO:0000269" key="7">
    <source>
    </source>
</evidence>
<evidence type="ECO:0000269" key="8">
    <source>
    </source>
</evidence>
<evidence type="ECO:0000269" key="9">
    <source>
    </source>
</evidence>
<evidence type="ECO:0000269" key="10">
    <source>
    </source>
</evidence>
<evidence type="ECO:0000269" key="11">
    <source>
    </source>
</evidence>
<evidence type="ECO:0000269" key="12">
    <source>
    </source>
</evidence>
<evidence type="ECO:0000303" key="13">
    <source>
    </source>
</evidence>
<evidence type="ECO:0000305" key="14"/>